<evidence type="ECO:0000250" key="1"/>
<evidence type="ECO:0000255" key="2">
    <source>
        <dbReference type="PROSITE-ProRule" id="PRU00783"/>
    </source>
</evidence>
<evidence type="ECO:0000256" key="3">
    <source>
        <dbReference type="SAM" id="MobiDB-lite"/>
    </source>
</evidence>
<evidence type="ECO:0000269" key="4">
    <source>
    </source>
</evidence>
<evidence type="ECO:0000305" key="5"/>
<protein>
    <recommendedName>
        <fullName>Ceramide kinase</fullName>
        <shortName>AtCERK</shortName>
        <ecNumber>2.7.1.138</ecNumber>
    </recommendedName>
    <alternativeName>
        <fullName>Protein ACCELERATED CELL DEATH 5</fullName>
    </alternativeName>
</protein>
<accession>Q6USK2</accession>
<accession>Q9LU45</accession>
<gene>
    <name type="primary">CERK</name>
    <name type="synonym">ACD5</name>
    <name type="ordered locus">At5g51290</name>
</gene>
<sequence>MEEGRDDEYCSFSNSGDRDGGLSGCFFLDHVGQVLLSRNHDGLSWKCLDSSDCEGTTCLGIIICENSETEIKFSDIYAVEFVSYGLVHSPKLGLRHAKECFRERLLNTQEMYRFTVHGFQSSPKEPCLWNLAAFTFGHMDLQTCQSWMDQLNYSLIKEVERPRNLLVFVHPKSGKGNGSKVWETVSKIFIRAKVNTKVIVTERAGHAFDVMASIQNKELHTYDGIIAVGGDGFFNEILNGYLLSRLKVPLPPSPSDSFNSVQSRGSSSVPEPGDEVHETDQKEHYPLLPDSVQEVMNFRTVNGSCEGIEDPDHPFSSERPRFGLIPAGSTDAIVMCTTGARDPVTSALHIILGRKLFLDAMQVVRWKTASTSTIEPYIRYAASFAGYGFYGDVISESEKYRWMGPKRYDYVGTKIFLKHRSYEAEVMFEEAESENSKASLHTRSKTWPFRNTTRSEKILCRANCKICNSKVGWNSASTTLNPCPEKTRWCRTKGRFLSIGAAVMSNRNERAPDGLVVDAHLSDGFLHLILIKDCSRPKYLWHLTELAKRGGEPLNFEFVEYHKTRAFTFTSFGEESVWNLDGEIFEAHQLSAQVLRGLIPLFASGPEI</sequence>
<name>CERK_ARATH</name>
<feature type="chain" id="PRO_0000430308" description="Ceramide kinase">
    <location>
        <begin position="1"/>
        <end position="608"/>
    </location>
</feature>
<feature type="domain" description="DAGKc" evidence="2">
    <location>
        <begin position="160"/>
        <end position="367"/>
    </location>
</feature>
<feature type="region of interest" description="Disordered" evidence="3">
    <location>
        <begin position="254"/>
        <end position="280"/>
    </location>
</feature>
<feature type="compositionally biased region" description="Polar residues" evidence="3">
    <location>
        <begin position="255"/>
        <end position="269"/>
    </location>
</feature>
<feature type="active site" description="Proton donor/acceptor" evidence="1">
    <location>
        <position position="231"/>
    </location>
</feature>
<feature type="binding site" evidence="2">
    <location>
        <begin position="170"/>
        <end position="174"/>
    </location>
    <ligand>
        <name>ATP</name>
        <dbReference type="ChEBI" id="CHEBI:30616"/>
    </ligand>
</feature>
<feature type="binding site" evidence="2">
    <location>
        <position position="201"/>
    </location>
    <ligand>
        <name>ATP</name>
        <dbReference type="ChEBI" id="CHEBI:30616"/>
    </ligand>
</feature>
<feature type="binding site" evidence="1">
    <location>
        <begin position="229"/>
        <end position="232"/>
    </location>
    <ligand>
        <name>substrate</name>
    </ligand>
</feature>
<feature type="binding site" evidence="2">
    <location>
        <begin position="230"/>
        <end position="236"/>
    </location>
    <ligand>
        <name>ATP</name>
        <dbReference type="ChEBI" id="CHEBI:30616"/>
    </ligand>
</feature>
<feature type="binding site" evidence="2">
    <location>
        <position position="329"/>
    </location>
    <ligand>
        <name>ATP</name>
        <dbReference type="ChEBI" id="CHEBI:30616"/>
    </ligand>
</feature>
<feature type="mutagenesis site" description="In acd5; reduces activity 10-fold." evidence="4">
    <original>G</original>
    <variation>R</variation>
    <location>
        <position position="412"/>
    </location>
</feature>
<dbReference type="EC" id="2.7.1.138"/>
<dbReference type="EMBL" id="AY362552">
    <property type="protein sequence ID" value="AAQ62904.1"/>
    <property type="molecule type" value="mRNA"/>
</dbReference>
<dbReference type="EMBL" id="AB023044">
    <property type="protein sequence ID" value="BAA97392.1"/>
    <property type="status" value="ALT_SEQ"/>
    <property type="molecule type" value="Genomic_DNA"/>
</dbReference>
<dbReference type="EMBL" id="CP002688">
    <property type="protein sequence ID" value="AED96062.1"/>
    <property type="molecule type" value="Genomic_DNA"/>
</dbReference>
<dbReference type="RefSeq" id="NP_568756.2">
    <property type="nucleotide sequence ID" value="NM_124508.4"/>
</dbReference>
<dbReference type="FunCoup" id="Q6USK2">
    <property type="interactions" value="2291"/>
</dbReference>
<dbReference type="STRING" id="3702.Q6USK2"/>
<dbReference type="PaxDb" id="3702-AT5G51290.1"/>
<dbReference type="ProteomicsDB" id="220471"/>
<dbReference type="EnsemblPlants" id="AT5G51290.1">
    <property type="protein sequence ID" value="AT5G51290.1"/>
    <property type="gene ID" value="AT5G51290"/>
</dbReference>
<dbReference type="GeneID" id="835203"/>
<dbReference type="Gramene" id="AT5G51290.1">
    <property type="protein sequence ID" value="AT5G51290.1"/>
    <property type="gene ID" value="AT5G51290"/>
</dbReference>
<dbReference type="KEGG" id="ath:AT5G51290"/>
<dbReference type="Araport" id="AT5G51290"/>
<dbReference type="TAIR" id="AT5G51290">
    <property type="gene designation" value="ACD5"/>
</dbReference>
<dbReference type="eggNOG" id="KOG1115">
    <property type="taxonomic scope" value="Eukaryota"/>
</dbReference>
<dbReference type="HOGENOM" id="CLU_013399_2_2_1"/>
<dbReference type="InParanoid" id="Q6USK2"/>
<dbReference type="OMA" id="HHRWKWA"/>
<dbReference type="PhylomeDB" id="Q6USK2"/>
<dbReference type="BioCyc" id="ARA:AT5G51290-MONOMER"/>
<dbReference type="BioCyc" id="MetaCyc:AT5G51290-MONOMER"/>
<dbReference type="BRENDA" id="2.7.1.138">
    <property type="organism ID" value="399"/>
</dbReference>
<dbReference type="PRO" id="PR:Q6USK2"/>
<dbReference type="Proteomes" id="UP000006548">
    <property type="component" value="Chromosome 5"/>
</dbReference>
<dbReference type="ExpressionAtlas" id="Q6USK2">
    <property type="expression patterns" value="baseline and differential"/>
</dbReference>
<dbReference type="GO" id="GO:0016020">
    <property type="term" value="C:membrane"/>
    <property type="evidence" value="ECO:0007669"/>
    <property type="project" value="GOC"/>
</dbReference>
<dbReference type="GO" id="GO:0005524">
    <property type="term" value="F:ATP binding"/>
    <property type="evidence" value="ECO:0007669"/>
    <property type="project" value="UniProtKB-KW"/>
</dbReference>
<dbReference type="GO" id="GO:0005509">
    <property type="term" value="F:calcium ion binding"/>
    <property type="evidence" value="ECO:0000314"/>
    <property type="project" value="UniProtKB"/>
</dbReference>
<dbReference type="GO" id="GO:0001729">
    <property type="term" value="F:ceramide kinase activity"/>
    <property type="evidence" value="ECO:0000314"/>
    <property type="project" value="TAIR"/>
</dbReference>
<dbReference type="GO" id="GO:0008219">
    <property type="term" value="P:cell death"/>
    <property type="evidence" value="ECO:0000315"/>
    <property type="project" value="TAIR"/>
</dbReference>
<dbReference type="GO" id="GO:0006672">
    <property type="term" value="P:ceramide metabolic process"/>
    <property type="evidence" value="ECO:0000314"/>
    <property type="project" value="TAIR"/>
</dbReference>
<dbReference type="GO" id="GO:0043067">
    <property type="term" value="P:regulation of programmed cell death"/>
    <property type="evidence" value="ECO:0000315"/>
    <property type="project" value="TAIR"/>
</dbReference>
<dbReference type="FunFam" id="2.60.200.40:FF:000014">
    <property type="entry name" value="Ceramide kinase"/>
    <property type="match status" value="1"/>
</dbReference>
<dbReference type="Gene3D" id="2.60.200.40">
    <property type="match status" value="1"/>
</dbReference>
<dbReference type="Gene3D" id="3.40.50.10330">
    <property type="entry name" value="Probable inorganic polyphosphate/atp-NAD kinase, domain 1"/>
    <property type="match status" value="1"/>
</dbReference>
<dbReference type="InterPro" id="IPR017438">
    <property type="entry name" value="ATP-NAD_kinase_N"/>
</dbReference>
<dbReference type="InterPro" id="IPR001206">
    <property type="entry name" value="Diacylglycerol_kinase_cat_dom"/>
</dbReference>
<dbReference type="InterPro" id="IPR050187">
    <property type="entry name" value="Lipid_Phosphate_FormReg"/>
</dbReference>
<dbReference type="InterPro" id="IPR016064">
    <property type="entry name" value="NAD/diacylglycerol_kinase_sf"/>
</dbReference>
<dbReference type="PANTHER" id="PTHR12358:SF6">
    <property type="entry name" value="CERAMIDE KINASE"/>
    <property type="match status" value="1"/>
</dbReference>
<dbReference type="PANTHER" id="PTHR12358">
    <property type="entry name" value="SPHINGOSINE KINASE"/>
    <property type="match status" value="1"/>
</dbReference>
<dbReference type="Pfam" id="PF00781">
    <property type="entry name" value="DAGK_cat"/>
    <property type="match status" value="1"/>
</dbReference>
<dbReference type="SUPFAM" id="SSF111331">
    <property type="entry name" value="NAD kinase/diacylglycerol kinase-like"/>
    <property type="match status" value="1"/>
</dbReference>
<dbReference type="PROSITE" id="PS50146">
    <property type="entry name" value="DAGK"/>
    <property type="match status" value="1"/>
</dbReference>
<keyword id="KW-0067">ATP-binding</keyword>
<keyword id="KW-0106">Calcium</keyword>
<keyword id="KW-0418">Kinase</keyword>
<keyword id="KW-0479">Metal-binding</keyword>
<keyword id="KW-0547">Nucleotide-binding</keyword>
<keyword id="KW-1185">Reference proteome</keyword>
<keyword id="KW-0808">Transferase</keyword>
<comment type="function">
    <text evidence="4">Catalyzes specifically the phosphorylation of ceramide to form ceramide 1-phosphate. Possesses high activity on ceramide analogs (C6, C8 synthetic ceramides) and lower activity on C6 and C8 dihydroceramides. Has weak activity on natural ceramides (a mixture of ceramides from bovine brain) and the synthetic substrate C2 ceramide. Has very poor activity on diacylglycerol and sphingosine. Ceramide is a critical sphingolipid metabolite that induces programmed cell death (PCD) in plants and ceramide-1-phosphate has a PCD suppressive effect. Thus, ceramide phosphorylation plays a role in the modulation of PCD and CERK activity is crucial for the maintenance of cell viability.</text>
</comment>
<comment type="catalytic activity">
    <reaction evidence="4">
        <text>an N-acylsphing-4-enine + ATP = an N-acylsphing-4-enine 1-phosphate + ADP + H(+)</text>
        <dbReference type="Rhea" id="RHEA:17929"/>
        <dbReference type="ChEBI" id="CHEBI:15378"/>
        <dbReference type="ChEBI" id="CHEBI:30616"/>
        <dbReference type="ChEBI" id="CHEBI:52639"/>
        <dbReference type="ChEBI" id="CHEBI:57674"/>
        <dbReference type="ChEBI" id="CHEBI:456216"/>
        <dbReference type="EC" id="2.7.1.138"/>
    </reaction>
</comment>
<comment type="cofactor">
    <cofactor evidence="4">
        <name>Ca(2+)</name>
        <dbReference type="ChEBI" id="CHEBI:29108"/>
    </cofactor>
</comment>
<comment type="biophysicochemical properties">
    <kinetics>
        <KM evidence="4">24.4 uM for C8 ceramide</KM>
    </kinetics>
    <phDependence>
        <text evidence="4">Optimum pH is 8.2 (at 30 degrees Celsius).</text>
    </phDependence>
</comment>
<comment type="induction">
    <text evidence="4">By infection with bacterial pathogen P.syringae.</text>
</comment>
<comment type="disruption phenotype">
    <text evidence="4">Enhanced apoptotic-like cell death late in development.</text>
</comment>
<comment type="sequence caution" evidence="5">
    <conflict type="erroneous gene model prediction">
        <sequence resource="EMBL-CDS" id="BAA97392"/>
    </conflict>
</comment>
<reference key="1">
    <citation type="journal article" date="2003" name="Genes Dev.">
        <title>Ceramides modulate programmed cell death in plants.</title>
        <authorList>
            <person name="Liang H."/>
            <person name="Yao N."/>
            <person name="Song J.T."/>
            <person name="Luo S."/>
            <person name="Lu H."/>
            <person name="Greenberg J.T."/>
        </authorList>
    </citation>
    <scope>NUCLEOTIDE SEQUENCE [MRNA]</scope>
    <scope>FUNCTION</scope>
    <scope>CATALYTIC ACTIVITY</scope>
    <scope>COFACTOR</scope>
    <scope>BIOPHYSICOCHEMICAL PROPERTIES</scope>
    <scope>INDUCTION</scope>
    <scope>DISRUPTION PHENOTYPE</scope>
    <scope>MUTAGENESIS OF GLY-412</scope>
</reference>
<reference key="2">
    <citation type="journal article" date="2000" name="DNA Res.">
        <title>Structural analysis of Arabidopsis thaliana chromosome 5. X. Sequence features of the regions of 3,076,755 bp covered by sixty P1 and TAC clones.</title>
        <authorList>
            <person name="Sato S."/>
            <person name="Nakamura Y."/>
            <person name="Kaneko T."/>
            <person name="Katoh T."/>
            <person name="Asamizu E."/>
            <person name="Kotani H."/>
            <person name="Tabata S."/>
        </authorList>
    </citation>
    <scope>NUCLEOTIDE SEQUENCE [LARGE SCALE GENOMIC DNA]</scope>
    <source>
        <strain>cv. Columbia</strain>
    </source>
</reference>
<reference key="3">
    <citation type="journal article" date="2017" name="Plant J.">
        <title>Araport11: a complete reannotation of the Arabidopsis thaliana reference genome.</title>
        <authorList>
            <person name="Cheng C.Y."/>
            <person name="Krishnakumar V."/>
            <person name="Chan A.P."/>
            <person name="Thibaud-Nissen F."/>
            <person name="Schobel S."/>
            <person name="Town C.D."/>
        </authorList>
    </citation>
    <scope>GENOME REANNOTATION</scope>
    <source>
        <strain>cv. Columbia</strain>
    </source>
</reference>
<proteinExistence type="evidence at protein level"/>
<organism>
    <name type="scientific">Arabidopsis thaliana</name>
    <name type="common">Mouse-ear cress</name>
    <dbReference type="NCBI Taxonomy" id="3702"/>
    <lineage>
        <taxon>Eukaryota</taxon>
        <taxon>Viridiplantae</taxon>
        <taxon>Streptophyta</taxon>
        <taxon>Embryophyta</taxon>
        <taxon>Tracheophyta</taxon>
        <taxon>Spermatophyta</taxon>
        <taxon>Magnoliopsida</taxon>
        <taxon>eudicotyledons</taxon>
        <taxon>Gunneridae</taxon>
        <taxon>Pentapetalae</taxon>
        <taxon>rosids</taxon>
        <taxon>malvids</taxon>
        <taxon>Brassicales</taxon>
        <taxon>Brassicaceae</taxon>
        <taxon>Camelineae</taxon>
        <taxon>Arabidopsis</taxon>
    </lineage>
</organism>